<reference key="1">
    <citation type="journal article" date="1990" name="Genomics">
        <title>Characterization of the cDNA coding for mouse plasminogen and localization of the gene to mouse chromosome 17.</title>
        <authorList>
            <person name="Degen S.J."/>
            <person name="Bell S.M."/>
            <person name="Schaefer L.A."/>
            <person name="Elliott R.W."/>
        </authorList>
    </citation>
    <scope>NUCLEOTIDE SEQUENCE [MRNA]</scope>
</reference>
<reference key="2">
    <citation type="submission" date="2002-02" db="EMBL/GenBank/DDBJ databases">
        <title>Genomic sequence analysis in the mouse T-complex region.</title>
        <authorList>
            <person name="Brathwaite M.E."/>
            <person name="Waeltz P."/>
            <person name="Qian Y."/>
            <person name="Dudekula D."/>
            <person name="Schlessinger D."/>
            <person name="Nagaraja R."/>
        </authorList>
    </citation>
    <scope>NUCLEOTIDE SEQUENCE [LARGE SCALE GENOMIC DNA]</scope>
    <source>
        <strain>129/Sv</strain>
    </source>
</reference>
<reference key="3">
    <citation type="journal article" date="2009" name="PLoS Biol.">
        <title>Lineage-specific biology revealed by a finished genome assembly of the mouse.</title>
        <authorList>
            <person name="Church D.M."/>
            <person name="Goodstadt L."/>
            <person name="Hillier L.W."/>
            <person name="Zody M.C."/>
            <person name="Goldstein S."/>
            <person name="She X."/>
            <person name="Bult C.J."/>
            <person name="Agarwala R."/>
            <person name="Cherry J.L."/>
            <person name="DiCuccio M."/>
            <person name="Hlavina W."/>
            <person name="Kapustin Y."/>
            <person name="Meric P."/>
            <person name="Maglott D."/>
            <person name="Birtle Z."/>
            <person name="Marques A.C."/>
            <person name="Graves T."/>
            <person name="Zhou S."/>
            <person name="Teague B."/>
            <person name="Potamousis K."/>
            <person name="Churas C."/>
            <person name="Place M."/>
            <person name="Herschleb J."/>
            <person name="Runnheim R."/>
            <person name="Forrest D."/>
            <person name="Amos-Landgraf J."/>
            <person name="Schwartz D.C."/>
            <person name="Cheng Z."/>
            <person name="Lindblad-Toh K."/>
            <person name="Eichler E.E."/>
            <person name="Ponting C.P."/>
        </authorList>
    </citation>
    <scope>NUCLEOTIDE SEQUENCE [LARGE SCALE GENOMIC DNA]</scope>
    <source>
        <strain>C57BL/6J</strain>
    </source>
</reference>
<reference key="4">
    <citation type="journal article" date="2004" name="Genome Res.">
        <title>The status, quality, and expansion of the NIH full-length cDNA project: the Mammalian Gene Collection (MGC).</title>
        <authorList>
            <consortium name="The MGC Project Team"/>
        </authorList>
    </citation>
    <scope>NUCLEOTIDE SEQUENCE [LARGE SCALE MRNA]</scope>
    <source>
        <tissue>Liver</tissue>
    </source>
</reference>
<reference key="5">
    <citation type="journal article" date="2002" name="J. Biol. Chem.">
        <title>Localization of regulatory elements mediating constitutive and cytokine-stimulated plasminogen gene expression.</title>
        <authorList>
            <person name="Bannach F.G."/>
            <person name="Gutierrez A."/>
            <person name="Fowler B.J."/>
            <person name="Bugge T.H."/>
            <person name="Degen J.L."/>
            <person name="Parmer R.J."/>
            <person name="Miles L.A."/>
        </authorList>
    </citation>
    <scope>NUCLEOTIDE SEQUENCE [GENOMIC DNA] OF 1-16</scope>
    <source>
        <strain>129/SvJ</strain>
        <tissue>Liver</tissue>
    </source>
</reference>
<reference key="6">
    <citation type="journal article" date="1994" name="Cell">
        <title>Angiostatin: a novel angiogenesis inhibitor that mediates the suppression of metastases by a Lewis lung carcinoma.</title>
        <authorList>
            <person name="O'Reilly M.S."/>
            <person name="Holmgren L."/>
            <person name="Shing Y."/>
            <person name="Chen C."/>
            <person name="Rosenthal R.A."/>
            <person name="Moses M."/>
            <person name="Lane W.S."/>
            <person name="Cao Y."/>
            <person name="Sage E.H."/>
            <person name="Folkman J."/>
        </authorList>
    </citation>
    <scope>CHARACTERIZATION OF ANGIOSTATIN</scope>
    <scope>PARTIAL PROTEIN SEQUENCE</scope>
</reference>
<reference key="7">
    <citation type="journal article" date="2010" name="Cell">
        <title>A tissue-specific atlas of mouse protein phosphorylation and expression.</title>
        <authorList>
            <person name="Huttlin E.L."/>
            <person name="Jedrychowski M.P."/>
            <person name="Elias J.E."/>
            <person name="Goswami T."/>
            <person name="Rad R."/>
            <person name="Beausoleil S.A."/>
            <person name="Villen J."/>
            <person name="Haas W."/>
            <person name="Sowa M.E."/>
            <person name="Gygi S.P."/>
        </authorList>
    </citation>
    <scope>IDENTIFICATION BY MASS SPECTROMETRY [LARGE SCALE ANALYSIS]</scope>
    <source>
        <tissue>Brown adipose tissue</tissue>
        <tissue>Heart</tissue>
        <tissue>Kidney</tissue>
        <tissue>Liver</tissue>
        <tissue>Lung</tissue>
        <tissue>Pancreas</tissue>
        <tissue>Spleen</tissue>
        <tissue>Testis</tissue>
    </source>
</reference>
<keyword id="KW-0094">Blood coagulation</keyword>
<keyword id="KW-0165">Cleavage on pair of basic residues</keyword>
<keyword id="KW-0903">Direct protein sequencing</keyword>
<keyword id="KW-1015">Disulfide bond</keyword>
<keyword id="KW-0280">Fibrinolysis</keyword>
<keyword id="KW-0356">Hemostasis</keyword>
<keyword id="KW-0378">Hydrolase</keyword>
<keyword id="KW-0420">Kringle</keyword>
<keyword id="KW-0597">Phosphoprotein</keyword>
<keyword id="KW-0645">Protease</keyword>
<keyword id="KW-1185">Reference proteome</keyword>
<keyword id="KW-0677">Repeat</keyword>
<keyword id="KW-0964">Secreted</keyword>
<keyword id="KW-0720">Serine protease</keyword>
<keyword id="KW-0732">Signal</keyword>
<keyword id="KW-0797">Tissue remodeling</keyword>
<keyword id="KW-0865">Zymogen</keyword>
<accession>P20918</accession>
<accession>Q8CIS2</accession>
<accession>Q91WJ5</accession>
<gene>
    <name type="primary">Plg</name>
</gene>
<organism>
    <name type="scientific">Mus musculus</name>
    <name type="common">Mouse</name>
    <dbReference type="NCBI Taxonomy" id="10090"/>
    <lineage>
        <taxon>Eukaryota</taxon>
        <taxon>Metazoa</taxon>
        <taxon>Chordata</taxon>
        <taxon>Craniata</taxon>
        <taxon>Vertebrata</taxon>
        <taxon>Euteleostomi</taxon>
        <taxon>Mammalia</taxon>
        <taxon>Eutheria</taxon>
        <taxon>Euarchontoglires</taxon>
        <taxon>Glires</taxon>
        <taxon>Rodentia</taxon>
        <taxon>Myomorpha</taxon>
        <taxon>Muroidea</taxon>
        <taxon>Muridae</taxon>
        <taxon>Murinae</taxon>
        <taxon>Mus</taxon>
        <taxon>Mus</taxon>
    </lineage>
</organism>
<name>PLMN_MOUSE</name>
<proteinExistence type="evidence at protein level"/>
<feature type="signal peptide">
    <location>
        <begin position="1"/>
        <end position="19"/>
    </location>
</feature>
<feature type="chain" id="PRO_0000028069" description="Plasminogen">
    <location>
        <begin position="20"/>
        <end position="812"/>
    </location>
</feature>
<feature type="chain" id="PRO_0000028070" description="Plasmin heavy chain A">
    <location>
        <begin position="20"/>
        <end position="581"/>
    </location>
</feature>
<feature type="peptide" id="PRO_0000028071" description="Activation peptide">
    <location>
        <begin position="20"/>
        <end position="97"/>
    </location>
</feature>
<feature type="chain" id="PRO_0000028072" description="Plasmin heavy chain A, short form">
    <location>
        <begin position="98"/>
        <end position="581"/>
    </location>
</feature>
<feature type="chain" id="PRO_0000028073" description="Angiostatin">
    <location>
        <begin position="98"/>
        <end position="436" status="uncertain"/>
    </location>
</feature>
<feature type="chain" id="PRO_0000028074" description="Plasmin light chain B">
    <location>
        <begin position="582"/>
        <end position="812"/>
    </location>
</feature>
<feature type="domain" description="PAN" evidence="5">
    <location>
        <begin position="20"/>
        <end position="98"/>
    </location>
</feature>
<feature type="domain" description="Kringle 1" evidence="3">
    <location>
        <begin position="103"/>
        <end position="181"/>
    </location>
</feature>
<feature type="domain" description="Kringle 2" evidence="3">
    <location>
        <begin position="184"/>
        <end position="262"/>
    </location>
</feature>
<feature type="domain" description="Kringle 3" evidence="3">
    <location>
        <begin position="275"/>
        <end position="352"/>
    </location>
</feature>
<feature type="domain" description="Kringle 4" evidence="3">
    <location>
        <begin position="377"/>
        <end position="454"/>
    </location>
</feature>
<feature type="domain" description="Kringle 5" evidence="3">
    <location>
        <begin position="481"/>
        <end position="560"/>
    </location>
</feature>
<feature type="domain" description="Peptidase S1" evidence="4">
    <location>
        <begin position="582"/>
        <end position="810"/>
    </location>
</feature>
<feature type="active site" description="Charge relay system" evidence="1">
    <location>
        <position position="624"/>
    </location>
</feature>
<feature type="active site" description="Charge relay system" evidence="1">
    <location>
        <position position="667"/>
    </location>
</feature>
<feature type="active site" description="Charge relay system" evidence="1">
    <location>
        <position position="762"/>
    </location>
</feature>
<feature type="modified residue" description="Phosphoserine" evidence="2">
    <location>
        <position position="598"/>
    </location>
</feature>
<feature type="modified residue" description="Phosphoserine" evidence="2">
    <location>
        <position position="690"/>
    </location>
</feature>
<feature type="disulfide bond" evidence="1">
    <location>
        <begin position="49"/>
        <end position="73"/>
    </location>
</feature>
<feature type="disulfide bond" evidence="1">
    <location>
        <begin position="53"/>
        <end position="61"/>
    </location>
</feature>
<feature type="disulfide bond" evidence="1">
    <location>
        <begin position="103"/>
        <end position="181"/>
    </location>
</feature>
<feature type="disulfide bond" evidence="1">
    <location>
        <begin position="124"/>
        <end position="164"/>
    </location>
</feature>
<feature type="disulfide bond" evidence="1">
    <location>
        <begin position="152"/>
        <end position="176"/>
    </location>
</feature>
<feature type="disulfide bond" evidence="1">
    <location>
        <begin position="185"/>
        <end position="262"/>
    </location>
</feature>
<feature type="disulfide bond" evidence="1">
    <location>
        <begin position="188"/>
        <end position="316"/>
    </location>
</feature>
<feature type="disulfide bond" evidence="1">
    <location>
        <begin position="206"/>
        <end position="245"/>
    </location>
</feature>
<feature type="disulfide bond" evidence="1">
    <location>
        <begin position="234"/>
        <end position="257"/>
    </location>
</feature>
<feature type="disulfide bond" evidence="1">
    <location>
        <begin position="275"/>
        <end position="352"/>
    </location>
</feature>
<feature type="disulfide bond" evidence="1">
    <location>
        <begin position="296"/>
        <end position="335"/>
    </location>
</feature>
<feature type="disulfide bond" evidence="1">
    <location>
        <begin position="324"/>
        <end position="347"/>
    </location>
</feature>
<feature type="disulfide bond" evidence="1">
    <location>
        <begin position="377"/>
        <end position="454"/>
    </location>
</feature>
<feature type="disulfide bond" evidence="1">
    <location>
        <begin position="398"/>
        <end position="437"/>
    </location>
</feature>
<feature type="disulfide bond" evidence="1">
    <location>
        <begin position="426"/>
        <end position="449"/>
    </location>
</feature>
<feature type="disulfide bond" evidence="1">
    <location>
        <begin position="481"/>
        <end position="560"/>
    </location>
</feature>
<feature type="disulfide bond" evidence="1">
    <location>
        <begin position="502"/>
        <end position="543"/>
    </location>
</feature>
<feature type="disulfide bond" evidence="1">
    <location>
        <begin position="531"/>
        <end position="555"/>
    </location>
</feature>
<feature type="disulfide bond" description="Interchain (between A and B chains)" evidence="1">
    <location>
        <begin position="568"/>
        <end position="687"/>
    </location>
</feature>
<feature type="disulfide bond" description="Interchain (between A and B chains)" evidence="1">
    <location>
        <begin position="578"/>
        <end position="586"/>
    </location>
</feature>
<feature type="disulfide bond" evidence="1">
    <location>
        <begin position="609"/>
        <end position="625"/>
    </location>
</feature>
<feature type="disulfide bond" evidence="1">
    <location>
        <begin position="701"/>
        <end position="768"/>
    </location>
</feature>
<feature type="disulfide bond" evidence="1">
    <location>
        <begin position="731"/>
        <end position="747"/>
    </location>
</feature>
<feature type="disulfide bond" evidence="1">
    <location>
        <begin position="758"/>
        <end position="786"/>
    </location>
</feature>
<feature type="sequence conflict" description="In Ref. 1; AAA50168." evidence="6" ref="1">
    <original>R</original>
    <variation>H</variation>
    <location>
        <position position="235"/>
    </location>
</feature>
<feature type="sequence conflict" description="In Ref. 1; AAA50168." evidence="6" ref="1">
    <original>G</original>
    <variation>D</variation>
    <location>
        <position position="525"/>
    </location>
</feature>
<feature type="sequence conflict" description="In Ref. 2; AAM22156 and 4; AAH14773/AAH57186." evidence="6" ref="2 4">
    <original>L</original>
    <variation>S</variation>
    <location>
        <position position="649"/>
    </location>
</feature>
<evidence type="ECO:0000250" key="1"/>
<evidence type="ECO:0000250" key="2">
    <source>
        <dbReference type="UniProtKB" id="P00747"/>
    </source>
</evidence>
<evidence type="ECO:0000255" key="3">
    <source>
        <dbReference type="PROSITE-ProRule" id="PRU00121"/>
    </source>
</evidence>
<evidence type="ECO:0000255" key="4">
    <source>
        <dbReference type="PROSITE-ProRule" id="PRU00274"/>
    </source>
</evidence>
<evidence type="ECO:0000255" key="5">
    <source>
        <dbReference type="PROSITE-ProRule" id="PRU00315"/>
    </source>
</evidence>
<evidence type="ECO:0000305" key="6"/>
<protein>
    <recommendedName>
        <fullName>Plasminogen</fullName>
        <ecNumber>3.4.21.7</ecNumber>
    </recommendedName>
    <component>
        <recommendedName>
            <fullName>Plasmin heavy chain A</fullName>
        </recommendedName>
    </component>
    <component>
        <recommendedName>
            <fullName>Activation peptide</fullName>
        </recommendedName>
    </component>
    <component>
        <recommendedName>
            <fullName>Angiostatin</fullName>
        </recommendedName>
    </component>
    <component>
        <recommendedName>
            <fullName>Plasmin heavy chain A, short form</fullName>
        </recommendedName>
    </component>
    <component>
        <recommendedName>
            <fullName>Plasmin light chain B</fullName>
        </recommendedName>
    </component>
</protein>
<dbReference type="EC" id="3.4.21.7"/>
<dbReference type="EMBL" id="J04766">
    <property type="protein sequence ID" value="AAA50168.1"/>
    <property type="molecule type" value="mRNA"/>
</dbReference>
<dbReference type="EMBL" id="AF481053">
    <property type="protein sequence ID" value="AAM22156.1"/>
    <property type="molecule type" value="Genomic_DNA"/>
</dbReference>
<dbReference type="EMBL" id="AC087901">
    <property type="status" value="NOT_ANNOTATED_CDS"/>
    <property type="molecule type" value="Genomic_DNA"/>
</dbReference>
<dbReference type="EMBL" id="BC014773">
    <property type="protein sequence ID" value="AAH14773.1"/>
    <property type="molecule type" value="mRNA"/>
</dbReference>
<dbReference type="EMBL" id="BC057186">
    <property type="protein sequence ID" value="AAH57186.1"/>
    <property type="molecule type" value="mRNA"/>
</dbReference>
<dbReference type="EMBL" id="AY134430">
    <property type="protein sequence ID" value="AAN15805.1"/>
    <property type="molecule type" value="Genomic_DNA"/>
</dbReference>
<dbReference type="CCDS" id="CCDS28390.1"/>
<dbReference type="PIR" id="A38514">
    <property type="entry name" value="PLMS"/>
</dbReference>
<dbReference type="RefSeq" id="NP_032903.3">
    <property type="nucleotide sequence ID" value="NM_008877.3"/>
</dbReference>
<dbReference type="SMR" id="P20918"/>
<dbReference type="BioGRID" id="202248">
    <property type="interactions" value="10"/>
</dbReference>
<dbReference type="FunCoup" id="P20918">
    <property type="interactions" value="602"/>
</dbReference>
<dbReference type="IntAct" id="P20918">
    <property type="interactions" value="4"/>
</dbReference>
<dbReference type="MINT" id="P20918"/>
<dbReference type="STRING" id="10090.ENSMUSP00000014578"/>
<dbReference type="BindingDB" id="P20918"/>
<dbReference type="ChEMBL" id="CHEMBL1075299"/>
<dbReference type="MEROPS" id="S01.233"/>
<dbReference type="GlyGen" id="P20918">
    <property type="glycosylation" value="1 site, 1 O-linked glycan (1 site)"/>
</dbReference>
<dbReference type="iPTMnet" id="P20918"/>
<dbReference type="PhosphoSitePlus" id="P20918"/>
<dbReference type="SwissPalm" id="P20918"/>
<dbReference type="REPRODUCTION-2DPAGE" id="P20918"/>
<dbReference type="CPTAC" id="non-CPTAC-3345"/>
<dbReference type="jPOST" id="P20918"/>
<dbReference type="PaxDb" id="10090-ENSMUSP00000014578"/>
<dbReference type="PeptideAtlas" id="P20918"/>
<dbReference type="ProteomicsDB" id="289622"/>
<dbReference type="DNASU" id="18815"/>
<dbReference type="Ensembl" id="ENSMUST00000014578.7">
    <property type="protein sequence ID" value="ENSMUSP00000014578.6"/>
    <property type="gene ID" value="ENSMUSG00000059481.6"/>
</dbReference>
<dbReference type="GeneID" id="18815"/>
<dbReference type="KEGG" id="mmu:18815"/>
<dbReference type="UCSC" id="uc008akt.2">
    <property type="organism name" value="mouse"/>
</dbReference>
<dbReference type="AGR" id="MGI:97620"/>
<dbReference type="CTD" id="5340"/>
<dbReference type="MGI" id="MGI:97620">
    <property type="gene designation" value="Plg"/>
</dbReference>
<dbReference type="VEuPathDB" id="HostDB:ENSMUSG00000059481"/>
<dbReference type="eggNOG" id="ENOG502QVNP">
    <property type="taxonomic scope" value="Eukaryota"/>
</dbReference>
<dbReference type="GeneTree" id="ENSGT00940000155208"/>
<dbReference type="HOGENOM" id="CLU_017565_0_0_1"/>
<dbReference type="InParanoid" id="P20918"/>
<dbReference type="OMA" id="TKNGVAC"/>
<dbReference type="OrthoDB" id="41905at2759"/>
<dbReference type="PhylomeDB" id="P20918"/>
<dbReference type="TreeFam" id="TF329901"/>
<dbReference type="Reactome" id="R-MMU-114608">
    <property type="pathway name" value="Platelet degranulation"/>
</dbReference>
<dbReference type="Reactome" id="R-MMU-1592389">
    <property type="pathway name" value="Activation of Matrix Metalloproteinases"/>
</dbReference>
<dbReference type="Reactome" id="R-MMU-186797">
    <property type="pathway name" value="Signaling by PDGF"/>
</dbReference>
<dbReference type="Reactome" id="R-MMU-75205">
    <property type="pathway name" value="Dissolution of Fibrin Clot"/>
</dbReference>
<dbReference type="BioGRID-ORCS" id="18815">
    <property type="hits" value="2 hits in 78 CRISPR screens"/>
</dbReference>
<dbReference type="ChiTaRS" id="Plg">
    <property type="organism name" value="mouse"/>
</dbReference>
<dbReference type="PRO" id="PR:P20918"/>
<dbReference type="Proteomes" id="UP000000589">
    <property type="component" value="Chromosome 17"/>
</dbReference>
<dbReference type="RNAct" id="P20918">
    <property type="molecule type" value="protein"/>
</dbReference>
<dbReference type="Bgee" id="ENSMUSG00000059481">
    <property type="expression patterns" value="Expressed in left lobe of liver and 52 other cell types or tissues"/>
</dbReference>
<dbReference type="GO" id="GO:0009986">
    <property type="term" value="C:cell surface"/>
    <property type="evidence" value="ECO:0000314"/>
    <property type="project" value="MGI"/>
</dbReference>
<dbReference type="GO" id="GO:0062023">
    <property type="term" value="C:collagen-containing extracellular matrix"/>
    <property type="evidence" value="ECO:0007005"/>
    <property type="project" value="BHF-UCL"/>
</dbReference>
<dbReference type="GO" id="GO:0009897">
    <property type="term" value="C:external side of plasma membrane"/>
    <property type="evidence" value="ECO:0007669"/>
    <property type="project" value="Ensembl"/>
</dbReference>
<dbReference type="GO" id="GO:0005576">
    <property type="term" value="C:extracellular region"/>
    <property type="evidence" value="ECO:0000304"/>
    <property type="project" value="Reactome"/>
</dbReference>
<dbReference type="GO" id="GO:0005615">
    <property type="term" value="C:extracellular space"/>
    <property type="evidence" value="ECO:0000250"/>
    <property type="project" value="HGNC-UCL"/>
</dbReference>
<dbReference type="GO" id="GO:0098978">
    <property type="term" value="C:glutamatergic synapse"/>
    <property type="evidence" value="ECO:0000314"/>
    <property type="project" value="SynGO"/>
</dbReference>
<dbReference type="GO" id="GO:0098685">
    <property type="term" value="C:Schaffer collateral - CA1 synapse"/>
    <property type="evidence" value="ECO:0000314"/>
    <property type="project" value="SynGO"/>
</dbReference>
<dbReference type="GO" id="GO:0034185">
    <property type="term" value="F:apolipoprotein binding"/>
    <property type="evidence" value="ECO:0007669"/>
    <property type="project" value="Ensembl"/>
</dbReference>
<dbReference type="GO" id="GO:0019900">
    <property type="term" value="F:kinase binding"/>
    <property type="evidence" value="ECO:0000353"/>
    <property type="project" value="CAFA"/>
</dbReference>
<dbReference type="GO" id="GO:0002020">
    <property type="term" value="F:protease binding"/>
    <property type="evidence" value="ECO:0007669"/>
    <property type="project" value="Ensembl"/>
</dbReference>
<dbReference type="GO" id="GO:1990405">
    <property type="term" value="F:protein antigen binding"/>
    <property type="evidence" value="ECO:0007669"/>
    <property type="project" value="Ensembl"/>
</dbReference>
<dbReference type="GO" id="GO:0019904">
    <property type="term" value="F:protein domain specific binding"/>
    <property type="evidence" value="ECO:0007669"/>
    <property type="project" value="Ensembl"/>
</dbReference>
<dbReference type="GO" id="GO:0051087">
    <property type="term" value="F:protein-folding chaperone binding"/>
    <property type="evidence" value="ECO:0007669"/>
    <property type="project" value="Ensembl"/>
</dbReference>
<dbReference type="GO" id="GO:0004252">
    <property type="term" value="F:serine-type endopeptidase activity"/>
    <property type="evidence" value="ECO:0007669"/>
    <property type="project" value="UniProtKB-EC"/>
</dbReference>
<dbReference type="GO" id="GO:0005102">
    <property type="term" value="F:signaling receptor binding"/>
    <property type="evidence" value="ECO:0007669"/>
    <property type="project" value="Ensembl"/>
</dbReference>
<dbReference type="GO" id="GO:0051702">
    <property type="term" value="P:biological process involved in interaction with symbiont"/>
    <property type="evidence" value="ECO:0007669"/>
    <property type="project" value="Ensembl"/>
</dbReference>
<dbReference type="GO" id="GO:0007596">
    <property type="term" value="P:blood coagulation"/>
    <property type="evidence" value="ECO:0000250"/>
    <property type="project" value="HGNC-UCL"/>
</dbReference>
<dbReference type="GO" id="GO:0022617">
    <property type="term" value="P:extracellular matrix disassembly"/>
    <property type="evidence" value="ECO:0007669"/>
    <property type="project" value="Ensembl"/>
</dbReference>
<dbReference type="GO" id="GO:0042730">
    <property type="term" value="P:fibrinolysis"/>
    <property type="evidence" value="ECO:0007669"/>
    <property type="project" value="UniProtKB-KW"/>
</dbReference>
<dbReference type="GO" id="GO:0060716">
    <property type="term" value="P:labyrinthine layer blood vessel development"/>
    <property type="evidence" value="ECO:0000315"/>
    <property type="project" value="MGI"/>
</dbReference>
<dbReference type="GO" id="GO:0071674">
    <property type="term" value="P:mononuclear cell migration"/>
    <property type="evidence" value="ECO:0000315"/>
    <property type="project" value="MGI"/>
</dbReference>
<dbReference type="GO" id="GO:0046716">
    <property type="term" value="P:muscle cell cellular homeostasis"/>
    <property type="evidence" value="ECO:0000315"/>
    <property type="project" value="MGI"/>
</dbReference>
<dbReference type="GO" id="GO:0045445">
    <property type="term" value="P:myoblast differentiation"/>
    <property type="evidence" value="ECO:0000315"/>
    <property type="project" value="MGI"/>
</dbReference>
<dbReference type="GO" id="GO:0016525">
    <property type="term" value="P:negative regulation of angiogenesis"/>
    <property type="evidence" value="ECO:0000304"/>
    <property type="project" value="MGI"/>
</dbReference>
<dbReference type="GO" id="GO:0010812">
    <property type="term" value="P:negative regulation of cell-substrate adhesion"/>
    <property type="evidence" value="ECO:0007669"/>
    <property type="project" value="Ensembl"/>
</dbReference>
<dbReference type="GO" id="GO:0051918">
    <property type="term" value="P:negative regulation of fibrinolysis"/>
    <property type="evidence" value="ECO:0007669"/>
    <property type="project" value="Ensembl"/>
</dbReference>
<dbReference type="GO" id="GO:0043536">
    <property type="term" value="P:positive regulation of blood vessel endothelial cell migration"/>
    <property type="evidence" value="ECO:0007669"/>
    <property type="project" value="Ensembl"/>
</dbReference>
<dbReference type="GO" id="GO:0051919">
    <property type="term" value="P:positive regulation of fibrinolysis"/>
    <property type="evidence" value="ECO:0007669"/>
    <property type="project" value="Ensembl"/>
</dbReference>
<dbReference type="GO" id="GO:0016485">
    <property type="term" value="P:protein processing"/>
    <property type="evidence" value="ECO:0000314"/>
    <property type="project" value="MGI"/>
</dbReference>
<dbReference type="GO" id="GO:0042246">
    <property type="term" value="P:tissue regeneration"/>
    <property type="evidence" value="ECO:0000315"/>
    <property type="project" value="MGI"/>
</dbReference>
<dbReference type="GO" id="GO:0048771">
    <property type="term" value="P:tissue remodeling"/>
    <property type="evidence" value="ECO:0007669"/>
    <property type="project" value="UniProtKB-KW"/>
</dbReference>
<dbReference type="GO" id="GO:0099183">
    <property type="term" value="P:trans-synaptic signaling by BDNF, modulating synaptic transmission"/>
    <property type="evidence" value="ECO:0000314"/>
    <property type="project" value="SynGO"/>
</dbReference>
<dbReference type="GO" id="GO:0060707">
    <property type="term" value="P:trophoblast giant cell differentiation"/>
    <property type="evidence" value="ECO:0000315"/>
    <property type="project" value="MGI"/>
</dbReference>
<dbReference type="CDD" id="cd00108">
    <property type="entry name" value="KR"/>
    <property type="match status" value="5"/>
</dbReference>
<dbReference type="CDD" id="cd01099">
    <property type="entry name" value="PAN_AP_HGF"/>
    <property type="match status" value="1"/>
</dbReference>
<dbReference type="CDD" id="cd00190">
    <property type="entry name" value="Tryp_SPc"/>
    <property type="match status" value="1"/>
</dbReference>
<dbReference type="FunFam" id="2.40.20.10:FF:000005">
    <property type="entry name" value="Plasminogen"/>
    <property type="match status" value="1"/>
</dbReference>
<dbReference type="FunFam" id="2.40.20.10:FF:000011">
    <property type="entry name" value="Plasminogen"/>
    <property type="match status" value="1"/>
</dbReference>
<dbReference type="FunFam" id="2.40.20.10:FF:000013">
    <property type="entry name" value="Plasminogen"/>
    <property type="match status" value="1"/>
</dbReference>
<dbReference type="FunFam" id="2.40.20.10:FF:000014">
    <property type="entry name" value="Plasminogen"/>
    <property type="match status" value="1"/>
</dbReference>
<dbReference type="FunFam" id="3.50.4.10:FF:000011">
    <property type="entry name" value="Plasminogen"/>
    <property type="match status" value="1"/>
</dbReference>
<dbReference type="FunFam" id="2.40.10.10:FF:000003">
    <property type="entry name" value="Transmembrane serine protease 3"/>
    <property type="match status" value="1"/>
</dbReference>
<dbReference type="Gene3D" id="3.50.4.10">
    <property type="entry name" value="Hepatocyte Growth Factor"/>
    <property type="match status" value="1"/>
</dbReference>
<dbReference type="Gene3D" id="2.40.20.10">
    <property type="entry name" value="Plasminogen Kringle 4"/>
    <property type="match status" value="4"/>
</dbReference>
<dbReference type="Gene3D" id="2.40.10.10">
    <property type="entry name" value="Trypsin-like serine proteases"/>
    <property type="match status" value="1"/>
</dbReference>
<dbReference type="InterPro" id="IPR000001">
    <property type="entry name" value="Kringle"/>
</dbReference>
<dbReference type="InterPro" id="IPR013806">
    <property type="entry name" value="Kringle-like"/>
</dbReference>
<dbReference type="InterPro" id="IPR018056">
    <property type="entry name" value="Kringle_CS"/>
</dbReference>
<dbReference type="InterPro" id="IPR038178">
    <property type="entry name" value="Kringle_sf"/>
</dbReference>
<dbReference type="InterPro" id="IPR003609">
    <property type="entry name" value="Pan_app"/>
</dbReference>
<dbReference type="InterPro" id="IPR023317">
    <property type="entry name" value="Pept_S1A_plasmin"/>
</dbReference>
<dbReference type="InterPro" id="IPR009003">
    <property type="entry name" value="Peptidase_S1_PA"/>
</dbReference>
<dbReference type="InterPro" id="IPR043504">
    <property type="entry name" value="Peptidase_S1_PA_chymotrypsin"/>
</dbReference>
<dbReference type="InterPro" id="IPR001314">
    <property type="entry name" value="Peptidase_S1A"/>
</dbReference>
<dbReference type="InterPro" id="IPR050759">
    <property type="entry name" value="Serine_protease_kringle"/>
</dbReference>
<dbReference type="InterPro" id="IPR001254">
    <property type="entry name" value="Trypsin_dom"/>
</dbReference>
<dbReference type="InterPro" id="IPR018114">
    <property type="entry name" value="TRYPSIN_HIS"/>
</dbReference>
<dbReference type="InterPro" id="IPR033116">
    <property type="entry name" value="TRYPSIN_SER"/>
</dbReference>
<dbReference type="PANTHER" id="PTHR24261:SF13">
    <property type="entry name" value="PLASMINOGEN"/>
    <property type="match status" value="1"/>
</dbReference>
<dbReference type="PANTHER" id="PTHR24261">
    <property type="entry name" value="PLASMINOGEN-RELATED"/>
    <property type="match status" value="1"/>
</dbReference>
<dbReference type="Pfam" id="PF00051">
    <property type="entry name" value="Kringle"/>
    <property type="match status" value="5"/>
</dbReference>
<dbReference type="Pfam" id="PF00024">
    <property type="entry name" value="PAN_1"/>
    <property type="match status" value="1"/>
</dbReference>
<dbReference type="Pfam" id="PF00089">
    <property type="entry name" value="Trypsin"/>
    <property type="match status" value="1"/>
</dbReference>
<dbReference type="PIRSF" id="PIRSF001150">
    <property type="entry name" value="Plasmin"/>
    <property type="match status" value="1"/>
</dbReference>
<dbReference type="PRINTS" id="PR00722">
    <property type="entry name" value="CHYMOTRYPSIN"/>
</dbReference>
<dbReference type="PRINTS" id="PR00018">
    <property type="entry name" value="KRINGLE"/>
</dbReference>
<dbReference type="SMART" id="SM00130">
    <property type="entry name" value="KR"/>
    <property type="match status" value="5"/>
</dbReference>
<dbReference type="SMART" id="SM00473">
    <property type="entry name" value="PAN_AP"/>
    <property type="match status" value="1"/>
</dbReference>
<dbReference type="SMART" id="SM00020">
    <property type="entry name" value="Tryp_SPc"/>
    <property type="match status" value="1"/>
</dbReference>
<dbReference type="SUPFAM" id="SSF57414">
    <property type="entry name" value="Hairpin loop containing domain-like"/>
    <property type="match status" value="1"/>
</dbReference>
<dbReference type="SUPFAM" id="SSF57440">
    <property type="entry name" value="Kringle-like"/>
    <property type="match status" value="5"/>
</dbReference>
<dbReference type="SUPFAM" id="SSF50494">
    <property type="entry name" value="Trypsin-like serine proteases"/>
    <property type="match status" value="1"/>
</dbReference>
<dbReference type="PROSITE" id="PS00021">
    <property type="entry name" value="KRINGLE_1"/>
    <property type="match status" value="5"/>
</dbReference>
<dbReference type="PROSITE" id="PS50070">
    <property type="entry name" value="KRINGLE_2"/>
    <property type="match status" value="5"/>
</dbReference>
<dbReference type="PROSITE" id="PS50948">
    <property type="entry name" value="PAN"/>
    <property type="match status" value="1"/>
</dbReference>
<dbReference type="PROSITE" id="PS50240">
    <property type="entry name" value="TRYPSIN_DOM"/>
    <property type="match status" value="1"/>
</dbReference>
<dbReference type="PROSITE" id="PS00134">
    <property type="entry name" value="TRYPSIN_HIS"/>
    <property type="match status" value="1"/>
</dbReference>
<dbReference type="PROSITE" id="PS00135">
    <property type="entry name" value="TRYPSIN_SER"/>
    <property type="match status" value="1"/>
</dbReference>
<comment type="function">
    <text evidence="1">Plasmin dissolves the fibrin of blood clots and acts as a proteolytic factor in a variety of other processes including embryonic development, tissue remodeling, tumor invasion, and inflammation. In ovulation, weakens the walls of the Graafian follicle. It activates the urokinase-type plasminogen activator, collagenases and several complement zymogens, such as C1, C4 and C5. Cleavage of fibronectin and laminin leads to cell detachment and apoptosis. Also cleaves fibrin, thrombospondin and von Willebrand factor. Its role in tissue remodeling and tumor invasion may be modulated by CSPG4. Binds to cells (By similarity).</text>
</comment>
<comment type="function">
    <text>Angiostatin is an angiogenesis inhibitor that blocks neovascularization and growth of experimental primary and metastatic tumors in vivo.</text>
</comment>
<comment type="catalytic activity">
    <reaction>
        <text>Preferential cleavage: Lys-|-Xaa &gt; Arg-|-Xaa, higher selectivity than trypsin. Converts fibrin into soluble products.</text>
        <dbReference type="EC" id="3.4.21.7"/>
    </reaction>
</comment>
<comment type="activity regulation">
    <text>Converted into plasmin by plasminogen activators, both plasminogen and its activator being bound to fibrin. Cannot be activated with streptokinase.</text>
</comment>
<comment type="subunit">
    <text evidence="2">Interacts (both mature PLG and the angiostatin peptide) with AMOT and CSPG4. Interacts (via the Kringle domains) with HRG; the interaction tethers PLG to the cell surface and enhances its activation. Interacts (via Kringle 4 domain) with ADA; the interaction stimulates PLG activation when in complex with DPP4. Angiostatin: Interacts with ATP5F1A; the interaction inhibits most of the angiogenic effects of angiostatin.</text>
</comment>
<comment type="subcellular location">
    <subcellularLocation>
        <location evidence="1">Secreted</location>
    </subcellularLocation>
    <text evidence="1">Locates to the cell surface where it is proteolytically cleaved to produce the active plasmin. Interaction with HRG tethers it to the cell surface (By similarity).</text>
</comment>
<comment type="domain">
    <text evidence="1">Kringle domains mediate interaction with CSPG4.</text>
</comment>
<comment type="PTM">
    <text evidence="1">In the presence of the inhibitor, the activation involves only cleavage after Arg-581, yielding two chains held together by two disulfide bonds. In the absence of the inhibitor, the activation involves additionally the removal of the activation peptide (By similarity).</text>
</comment>
<comment type="miscellaneous">
    <text>Plasmin is inactivated by alpha-2-antiplasmin immediately after dissociation from the clot.</text>
</comment>
<comment type="miscellaneous">
    <text>In the presence of the inhibitor, the activation involves only cleavage after Arg-581, resulting in 2 chains held together by 2 disulfide bonds. Without the inhibitor, the activation also involves removal of the activation peptide.</text>
</comment>
<comment type="similarity">
    <text evidence="4">Belongs to the peptidase S1 family. Plasminogen subfamily.</text>
</comment>
<sequence>MDHKEVILLFLLLLKPGQGDSLDGYISTQGASLFSLTKKQLAAGGVSDCLAKCEGETDFVCRSFQYHSKEQQCVIMAENSKTSSIIRMRDVILFEKRVYLSECKTGIGNGYRGTMSRTKSGVACQKWGATFPHVPNYSPSTHPNEGLEENYCRNPDNDEQGPWCYTTDPDKRYDYCNIPECEEECMYCSGEKYEGKISKTMSGLDCQAWDSQSPHAHGYIPAKFPSKNLKMNYCRNPDGEPRPWCFTTDPTKRWEYCDIPRCTTPPPPPSPTYQCLKGRGENYRGTVSVTVSGKTCQRWSEQTPHRHNRTPENFPCKNLEENYCRNPDGETAPWCYTTDSQLRWEYCEIPSCESSASPDQSDSSVPPEEQTPVVQECYQSDGQSYRGTSSTTITGKKCQSWAAMFPHRHSKTPENFPDAGLEMNYCRNPDGDKGPWCYTTDPSVRWEYCNLKRCSETGGSVVELPTVSQEPSGPSDSETDCMYGNGKDYRGKTAVTAAGTPCQGWAAQEPHRHSIFTPQTNPRAGLEKNYCRNPDGDVNGPWCYTTNPRKLYDYCDIPLCASASSFECGKPQVEPKKCPGRVVGGCVANPHSWPWQISLRTRFTGQHFCGGTLIAPEWVLTAAHCLEKSSRPEFYKVILGAHEEYIRGLDVQEISVAKLILEPNNRDIALLKLSRPATITDKVIPACLPSPNYMVADRTICYITGWGETQGTFGAGRLKEAQLPVIENKVCNRVEYLNNRVKSTELCAGQLAGGVDSCQGDSGGPLVCFEKDKYILQGVTSWGLGCARPNKPGVYVRVSRFVDWIEREMRNN</sequence>